<comment type="catalytic activity">
    <reaction>
        <text>L-arginyl-[protein] + NAD(+) = N(omega)-(ADP-D-ribosyl)-L-arginyl-[protein] + nicotinamide + H(+)</text>
        <dbReference type="Rhea" id="RHEA:19149"/>
        <dbReference type="Rhea" id="RHEA-COMP:10532"/>
        <dbReference type="Rhea" id="RHEA-COMP:15087"/>
        <dbReference type="ChEBI" id="CHEBI:15378"/>
        <dbReference type="ChEBI" id="CHEBI:17154"/>
        <dbReference type="ChEBI" id="CHEBI:29965"/>
        <dbReference type="ChEBI" id="CHEBI:57540"/>
        <dbReference type="ChEBI" id="CHEBI:142554"/>
        <dbReference type="EC" id="2.4.2.31"/>
    </reaction>
</comment>
<comment type="interaction">
    <interactant intactId="EBI-50185646">
        <id>Q96L15</id>
    </interactant>
    <interactant intactId="EBI-1050125">
        <id>O15173</id>
        <label>PGRMC2</label>
    </interactant>
    <organismsDiffer>false</organismsDiffer>
    <experiments>3</experiments>
</comment>
<comment type="subcellular location">
    <subcellularLocation>
        <location evidence="9">Secreted</location>
    </subcellularLocation>
</comment>
<comment type="alternative products">
    <event type="alternative splicing"/>
    <isoform>
        <id>Q96L15-1</id>
        <name>1</name>
        <sequence type="displayed"/>
    </isoform>
    <isoform>
        <id>Q96L15-2</id>
        <name>2</name>
        <sequence type="described" ref="VSP_013145 VSP_013146"/>
    </isoform>
</comment>
<comment type="similarity">
    <text evidence="9">Belongs to the Arg-specific ADP-ribosyltransferase family.</text>
</comment>
<keyword id="KW-0025">Alternative splicing</keyword>
<keyword id="KW-1015">Disulfide bond</keyword>
<keyword id="KW-0325">Glycoprotein</keyword>
<keyword id="KW-0328">Glycosyltransferase</keyword>
<keyword id="KW-0520">NAD</keyword>
<keyword id="KW-0521">NADP</keyword>
<keyword id="KW-0548">Nucleotidyltransferase</keyword>
<keyword id="KW-1267">Proteomics identification</keyword>
<keyword id="KW-1185">Reference proteome</keyword>
<keyword id="KW-0964">Secreted</keyword>
<keyword id="KW-0732">Signal</keyword>
<keyword id="KW-0808">Transferase</keyword>
<gene>
    <name type="primary">ART5</name>
    <name type="ORF">UNQ575/PRO1137</name>
</gene>
<sequence>MALAALMIALGSLGLHTWQAQAVPILPLGLAPDTFDDTYVGCAEEMEEKAAPLLKEEMAHHALLRESWEAAQETWEDKRRGLTLPPGFKAQNGIAIMVYTNSSNTLYWELNQAVRTGGGSRELYMRHFPFKALHFYLIRALQLLRGSGGCSRGPGEVVFRGVGSLRFEPKRLGDSVRLGQFASSSLDKAVAHRFGNATLFSLTTCFGAPIQAFSVFPKEREVLIPPHEVFLVTRFSQDGAQSLVTLWSYNQTCSHFNCAYLGGEKRRGCVSAPGALGTGDLHMTKRHLQQP</sequence>
<organism>
    <name type="scientific">Homo sapiens</name>
    <name type="common">Human</name>
    <dbReference type="NCBI Taxonomy" id="9606"/>
    <lineage>
        <taxon>Eukaryota</taxon>
        <taxon>Metazoa</taxon>
        <taxon>Chordata</taxon>
        <taxon>Craniata</taxon>
        <taxon>Vertebrata</taxon>
        <taxon>Euteleostomi</taxon>
        <taxon>Mammalia</taxon>
        <taxon>Eutheria</taxon>
        <taxon>Euarchontoglires</taxon>
        <taxon>Primates</taxon>
        <taxon>Haplorrhini</taxon>
        <taxon>Catarrhini</taxon>
        <taxon>Hominidae</taxon>
        <taxon>Homo</taxon>
    </lineage>
</organism>
<reference key="1">
    <citation type="journal article" date="2002" name="Protein Sci.">
        <title>The family of toxin-related ecto-ADP-ribosyltransferases in humans and the mouse.</title>
        <authorList>
            <person name="Glowacki G."/>
            <person name="Braren R."/>
            <person name="Firner K."/>
            <person name="Nissen M."/>
            <person name="Kuehl M."/>
            <person name="Reche P."/>
            <person name="Bazan J.F."/>
            <person name="Cetkovic-Cvrlje M."/>
            <person name="Leiter E."/>
            <person name="Haag F."/>
            <person name="Koch-Nolte F."/>
        </authorList>
    </citation>
    <scope>NUCLEOTIDE SEQUENCE [MRNA] (ISOFORM 1)</scope>
    <scope>VARIANT THR-24 INS</scope>
    <source>
        <tissue>Testis</tissue>
    </source>
</reference>
<reference key="2">
    <citation type="journal article" date="2003" name="Genome Res.">
        <title>The secreted protein discovery initiative (SPDI), a large-scale effort to identify novel human secreted and transmembrane proteins: a bioinformatics assessment.</title>
        <authorList>
            <person name="Clark H.F."/>
            <person name="Gurney A.L."/>
            <person name="Abaya E."/>
            <person name="Baker K."/>
            <person name="Baldwin D.T."/>
            <person name="Brush J."/>
            <person name="Chen J."/>
            <person name="Chow B."/>
            <person name="Chui C."/>
            <person name="Crowley C."/>
            <person name="Currell B."/>
            <person name="Deuel B."/>
            <person name="Dowd P."/>
            <person name="Eaton D."/>
            <person name="Foster J.S."/>
            <person name="Grimaldi C."/>
            <person name="Gu Q."/>
            <person name="Hass P.E."/>
            <person name="Heldens S."/>
            <person name="Huang A."/>
            <person name="Kim H.S."/>
            <person name="Klimowski L."/>
            <person name="Jin Y."/>
            <person name="Johnson S."/>
            <person name="Lee J."/>
            <person name="Lewis L."/>
            <person name="Liao D."/>
            <person name="Mark M.R."/>
            <person name="Robbie E."/>
            <person name="Sanchez C."/>
            <person name="Schoenfeld J."/>
            <person name="Seshagiri S."/>
            <person name="Simmons L."/>
            <person name="Singh J."/>
            <person name="Smith V."/>
            <person name="Stinson J."/>
            <person name="Vagts A."/>
            <person name="Vandlen R.L."/>
            <person name="Watanabe C."/>
            <person name="Wieand D."/>
            <person name="Woods K."/>
            <person name="Xie M.-H."/>
            <person name="Yansura D.G."/>
            <person name="Yi S."/>
            <person name="Yu G."/>
            <person name="Yuan J."/>
            <person name="Zhang M."/>
            <person name="Zhang Z."/>
            <person name="Goddard A.D."/>
            <person name="Wood W.I."/>
            <person name="Godowski P.J."/>
            <person name="Gray A.M."/>
        </authorList>
    </citation>
    <scope>NUCLEOTIDE SEQUENCE [LARGE SCALE MRNA] (ISOFORM 2)</scope>
    <scope>VARIANT THR-24 INS</scope>
</reference>
<reference key="3">
    <citation type="journal article" date="2006" name="Nature">
        <title>Human chromosome 11 DNA sequence and analysis including novel gene identification.</title>
        <authorList>
            <person name="Taylor T.D."/>
            <person name="Noguchi H."/>
            <person name="Totoki Y."/>
            <person name="Toyoda A."/>
            <person name="Kuroki Y."/>
            <person name="Dewar K."/>
            <person name="Lloyd C."/>
            <person name="Itoh T."/>
            <person name="Takeda T."/>
            <person name="Kim D.-W."/>
            <person name="She X."/>
            <person name="Barlow K.F."/>
            <person name="Bloom T."/>
            <person name="Bruford E."/>
            <person name="Chang J.L."/>
            <person name="Cuomo C.A."/>
            <person name="Eichler E."/>
            <person name="FitzGerald M.G."/>
            <person name="Jaffe D.B."/>
            <person name="LaButti K."/>
            <person name="Nicol R."/>
            <person name="Park H.-S."/>
            <person name="Seaman C."/>
            <person name="Sougnez C."/>
            <person name="Yang X."/>
            <person name="Zimmer A.R."/>
            <person name="Zody M.C."/>
            <person name="Birren B.W."/>
            <person name="Nusbaum C."/>
            <person name="Fujiyama A."/>
            <person name="Hattori M."/>
            <person name="Rogers J."/>
            <person name="Lander E.S."/>
            <person name="Sakaki Y."/>
        </authorList>
    </citation>
    <scope>NUCLEOTIDE SEQUENCE [LARGE SCALE GENOMIC DNA]</scope>
</reference>
<reference key="4">
    <citation type="submission" date="2005-07" db="EMBL/GenBank/DDBJ databases">
        <authorList>
            <person name="Mural R.J."/>
            <person name="Istrail S."/>
            <person name="Sutton G.G."/>
            <person name="Florea L."/>
            <person name="Halpern A.L."/>
            <person name="Mobarry C.M."/>
            <person name="Lippert R."/>
            <person name="Walenz B."/>
            <person name="Shatkay H."/>
            <person name="Dew I."/>
            <person name="Miller J.R."/>
            <person name="Flanigan M.J."/>
            <person name="Edwards N.J."/>
            <person name="Bolanos R."/>
            <person name="Fasulo D."/>
            <person name="Halldorsson B.V."/>
            <person name="Hannenhalli S."/>
            <person name="Turner R."/>
            <person name="Yooseph S."/>
            <person name="Lu F."/>
            <person name="Nusskern D.R."/>
            <person name="Shue B.C."/>
            <person name="Zheng X.H."/>
            <person name="Zhong F."/>
            <person name="Delcher A.L."/>
            <person name="Huson D.H."/>
            <person name="Kravitz S.A."/>
            <person name="Mouchard L."/>
            <person name="Reinert K."/>
            <person name="Remington K.A."/>
            <person name="Clark A.G."/>
            <person name="Waterman M.S."/>
            <person name="Eichler E.E."/>
            <person name="Adams M.D."/>
            <person name="Hunkapiller M.W."/>
            <person name="Myers E.W."/>
            <person name="Venter J.C."/>
        </authorList>
    </citation>
    <scope>NUCLEOTIDE SEQUENCE [LARGE SCALE GENOMIC DNA]</scope>
    <scope>VARIANT THR-24 INS</scope>
</reference>
<reference key="5">
    <citation type="journal article" date="2004" name="Genome Res.">
        <title>The status, quality, and expansion of the NIH full-length cDNA project: the Mammalian Gene Collection (MGC).</title>
        <authorList>
            <consortium name="The MGC Project Team"/>
        </authorList>
    </citation>
    <scope>NUCLEOTIDE SEQUENCE [LARGE SCALE MRNA] (ISOFORM 1)</scope>
    <scope>VARIANT THR-24 INS</scope>
    <source>
        <tissue>Liver</tissue>
    </source>
</reference>
<reference key="6">
    <citation type="journal article" date="2010" name="Trends Biochem. Sci.">
        <title>Toward a unified nomenclature for mammalian ADP-ribosyltransferases.</title>
        <authorList>
            <person name="Hottiger M.O."/>
            <person name="Hassa P.O."/>
            <person name="Luscher B."/>
            <person name="Schuler H."/>
            <person name="Koch-Nolte F."/>
        </authorList>
    </citation>
    <scope>NOMENCLATURE</scope>
</reference>
<protein>
    <recommendedName>
        <fullName>Ecto-ADP-ribosyltransferase 5</fullName>
        <ecNumber>2.4.2.31</ecNumber>
    </recommendedName>
    <alternativeName>
        <fullName>ADP-ribosyltransferase C2 and C3 toxin-like 5</fullName>
        <shortName>ARTC5</shortName>
    </alternativeName>
    <alternativeName>
        <fullName>Mono(ADP-ribosyl)transferase 5</fullName>
    </alternativeName>
    <alternativeName>
        <fullName>NAD(P)(+)--arginine ADP-ribosyltransferase 5</fullName>
    </alternativeName>
</protein>
<evidence type="ECO:0000250" key="1"/>
<evidence type="ECO:0000255" key="2"/>
<evidence type="ECO:0000255" key="3">
    <source>
        <dbReference type="PROSITE-ProRule" id="PRU01340"/>
    </source>
</evidence>
<evidence type="ECO:0000269" key="4">
    <source>
    </source>
</evidence>
<evidence type="ECO:0000269" key="5">
    <source>
    </source>
</evidence>
<evidence type="ECO:0000269" key="6">
    <source>
    </source>
</evidence>
<evidence type="ECO:0000269" key="7">
    <source ref="4"/>
</evidence>
<evidence type="ECO:0000303" key="8">
    <source>
    </source>
</evidence>
<evidence type="ECO:0000305" key="9"/>
<name>NAR5_HUMAN</name>
<dbReference type="EC" id="2.4.2.31"/>
<dbReference type="EMBL" id="Y16835">
    <property type="protein sequence ID" value="CAC79987.1"/>
    <property type="molecule type" value="mRNA"/>
</dbReference>
<dbReference type="EMBL" id="AY358466">
    <property type="protein sequence ID" value="AAQ88831.1"/>
    <property type="molecule type" value="mRNA"/>
</dbReference>
<dbReference type="EMBL" id="AC060812">
    <property type="status" value="NOT_ANNOTATED_CDS"/>
    <property type="molecule type" value="Genomic_DNA"/>
</dbReference>
<dbReference type="EMBL" id="CH471158">
    <property type="protein sequence ID" value="EAX02556.1"/>
    <property type="molecule type" value="Genomic_DNA"/>
</dbReference>
<dbReference type="EMBL" id="BC014577">
    <property type="protein sequence ID" value="AAH14577.1"/>
    <property type="molecule type" value="mRNA"/>
</dbReference>
<dbReference type="CCDS" id="CCDS73242.1">
    <molecule id="Q96L15-2"/>
</dbReference>
<dbReference type="CCDS" id="CCDS7743.1">
    <molecule id="Q96L15-1"/>
</dbReference>
<dbReference type="RefSeq" id="NP_001073004.1">
    <molecule id="Q96L15-1"/>
    <property type="nucleotide sequence ID" value="NM_001079536.2"/>
</dbReference>
<dbReference type="RefSeq" id="NP_001284597.1">
    <molecule id="Q96L15-2"/>
    <property type="nucleotide sequence ID" value="NM_001297668.2"/>
</dbReference>
<dbReference type="RefSeq" id="NP_443750.2">
    <molecule id="Q96L15-1"/>
    <property type="nucleotide sequence ID" value="NM_053017.4"/>
</dbReference>
<dbReference type="SMR" id="Q96L15"/>
<dbReference type="BioGRID" id="125545">
    <property type="interactions" value="91"/>
</dbReference>
<dbReference type="FunCoup" id="Q96L15">
    <property type="interactions" value="40"/>
</dbReference>
<dbReference type="IntAct" id="Q96L15">
    <property type="interactions" value="51"/>
</dbReference>
<dbReference type="STRING" id="9606.ENSP00000352992"/>
<dbReference type="GlyCosmos" id="Q96L15">
    <property type="glycosylation" value="3 sites, No reported glycans"/>
</dbReference>
<dbReference type="GlyGen" id="Q96L15">
    <property type="glycosylation" value="4 sites, 1 O-linked glycan (1 site)"/>
</dbReference>
<dbReference type="iPTMnet" id="Q96L15"/>
<dbReference type="PhosphoSitePlus" id="Q96L15"/>
<dbReference type="BioMuta" id="ART5"/>
<dbReference type="DMDM" id="296439487"/>
<dbReference type="jPOST" id="Q96L15"/>
<dbReference type="MassIVE" id="Q96L15"/>
<dbReference type="PaxDb" id="9606-ENSP00000380258"/>
<dbReference type="PeptideAtlas" id="Q96L15"/>
<dbReference type="ProteomicsDB" id="77139">
    <molecule id="Q96L15-1"/>
</dbReference>
<dbReference type="ProteomicsDB" id="77140">
    <molecule id="Q96L15-2"/>
</dbReference>
<dbReference type="Antibodypedia" id="23345">
    <property type="antibodies" value="221 antibodies from 25 providers"/>
</dbReference>
<dbReference type="DNASU" id="116969"/>
<dbReference type="Ensembl" id="ENST00000359918.8">
    <molecule id="Q96L15-1"/>
    <property type="protein sequence ID" value="ENSP00000352992.4"/>
    <property type="gene ID" value="ENSG00000167311.14"/>
</dbReference>
<dbReference type="Ensembl" id="ENST00000397067.7">
    <molecule id="Q96L15-2"/>
    <property type="protein sequence ID" value="ENSP00000380257.3"/>
    <property type="gene ID" value="ENSG00000167311.14"/>
</dbReference>
<dbReference type="Ensembl" id="ENST00000397068.8">
    <molecule id="Q96L15-1"/>
    <property type="protein sequence ID" value="ENSP00000380258.3"/>
    <property type="gene ID" value="ENSG00000167311.14"/>
</dbReference>
<dbReference type="GeneID" id="116969"/>
<dbReference type="KEGG" id="hsa:116969"/>
<dbReference type="MANE-Select" id="ENST00000397068.8">
    <property type="protein sequence ID" value="ENSP00000380258.3"/>
    <property type="RefSeq nucleotide sequence ID" value="NM_053017.5"/>
    <property type="RefSeq protein sequence ID" value="NP_443750.2"/>
</dbReference>
<dbReference type="UCSC" id="uc001lyb.2">
    <molecule id="Q96L15-1"/>
    <property type="organism name" value="human"/>
</dbReference>
<dbReference type="AGR" id="HGNC:24049"/>
<dbReference type="CTD" id="116969"/>
<dbReference type="GeneCards" id="ART5"/>
<dbReference type="HGNC" id="HGNC:24049">
    <property type="gene designation" value="ART5"/>
</dbReference>
<dbReference type="HPA" id="ENSG00000167311">
    <property type="expression patterns" value="Tissue enhanced (ovary, skeletal muscle, testis)"/>
</dbReference>
<dbReference type="MIM" id="610625">
    <property type="type" value="gene"/>
</dbReference>
<dbReference type="neXtProt" id="NX_Q96L15"/>
<dbReference type="OpenTargets" id="ENSG00000167311"/>
<dbReference type="PharmGKB" id="PA134887713"/>
<dbReference type="VEuPathDB" id="HostDB:ENSG00000167311"/>
<dbReference type="eggNOG" id="ENOG502SKQR">
    <property type="taxonomic scope" value="Eukaryota"/>
</dbReference>
<dbReference type="GeneTree" id="ENSGT01030000234601"/>
<dbReference type="HOGENOM" id="CLU_059744_3_2_1"/>
<dbReference type="InParanoid" id="Q96L15"/>
<dbReference type="OMA" id="WEHRRQG"/>
<dbReference type="OrthoDB" id="423533at2759"/>
<dbReference type="PAN-GO" id="Q96L15">
    <property type="GO annotations" value="2 GO annotations based on evolutionary models"/>
</dbReference>
<dbReference type="PhylomeDB" id="Q96L15"/>
<dbReference type="TreeFam" id="TF335356"/>
<dbReference type="PathwayCommons" id="Q96L15"/>
<dbReference type="SignaLink" id="Q96L15"/>
<dbReference type="BioGRID-ORCS" id="116969">
    <property type="hits" value="18 hits in 1144 CRISPR screens"/>
</dbReference>
<dbReference type="ChiTaRS" id="ART5">
    <property type="organism name" value="human"/>
</dbReference>
<dbReference type="GenomeRNAi" id="116969"/>
<dbReference type="Pharos" id="Q96L15">
    <property type="development level" value="Tbio"/>
</dbReference>
<dbReference type="PRO" id="PR:Q96L15"/>
<dbReference type="Proteomes" id="UP000005640">
    <property type="component" value="Chromosome 11"/>
</dbReference>
<dbReference type="RNAct" id="Q96L15">
    <property type="molecule type" value="protein"/>
</dbReference>
<dbReference type="Bgee" id="ENSG00000167311">
    <property type="expression patterns" value="Expressed in left testis and 101 other cell types or tissues"/>
</dbReference>
<dbReference type="ExpressionAtlas" id="Q96L15">
    <property type="expression patterns" value="baseline and differential"/>
</dbReference>
<dbReference type="GO" id="GO:0005576">
    <property type="term" value="C:extracellular region"/>
    <property type="evidence" value="ECO:0007669"/>
    <property type="project" value="UniProtKB-SubCell"/>
</dbReference>
<dbReference type="GO" id="GO:0003950">
    <property type="term" value="F:NAD+ poly-ADP-ribosyltransferase activity"/>
    <property type="evidence" value="ECO:0000318"/>
    <property type="project" value="GO_Central"/>
</dbReference>
<dbReference type="GO" id="GO:0106274">
    <property type="term" value="F:NAD+-protein-arginine ADP-ribosyltransferase activity"/>
    <property type="evidence" value="ECO:0007669"/>
    <property type="project" value="UniProtKB-EC"/>
</dbReference>
<dbReference type="GO" id="GO:0016779">
    <property type="term" value="F:nucleotidyltransferase activity"/>
    <property type="evidence" value="ECO:0007669"/>
    <property type="project" value="UniProtKB-KW"/>
</dbReference>
<dbReference type="FunFam" id="3.90.176.10:FF:000001">
    <property type="entry name" value="NAD(P)(+)--arginine ADP-ribosyltransferase"/>
    <property type="match status" value="1"/>
</dbReference>
<dbReference type="Gene3D" id="3.90.176.10">
    <property type="entry name" value="Toxin ADP-ribosyltransferase, Chain A, domain 1"/>
    <property type="match status" value="1"/>
</dbReference>
<dbReference type="InterPro" id="IPR050999">
    <property type="entry name" value="ADP-ribosyltransferase_ARG"/>
</dbReference>
<dbReference type="InterPro" id="IPR000768">
    <property type="entry name" value="ART"/>
</dbReference>
<dbReference type="PANTHER" id="PTHR10339">
    <property type="entry name" value="ADP-RIBOSYLTRANSFERASE"/>
    <property type="match status" value="1"/>
</dbReference>
<dbReference type="PANTHER" id="PTHR10339:SF2">
    <property type="entry name" value="ECTO-ADP-RIBOSYLTRANSFERASE 5"/>
    <property type="match status" value="1"/>
</dbReference>
<dbReference type="Pfam" id="PF01129">
    <property type="entry name" value="ART"/>
    <property type="match status" value="1"/>
</dbReference>
<dbReference type="PRINTS" id="PR00970">
    <property type="entry name" value="RIBTRNSFRASE"/>
</dbReference>
<dbReference type="SUPFAM" id="SSF56399">
    <property type="entry name" value="ADP-ribosylation"/>
    <property type="match status" value="1"/>
</dbReference>
<dbReference type="PROSITE" id="PS01291">
    <property type="entry name" value="ART"/>
    <property type="match status" value="1"/>
</dbReference>
<dbReference type="PROSITE" id="PS51996">
    <property type="entry name" value="TR_MART"/>
    <property type="match status" value="1"/>
</dbReference>
<accession>Q96L15</accession>
<accession>C9IYG7</accession>
<accession>Q6UX84</accession>
<accession>Q86W02</accession>
<feature type="signal peptide" evidence="2">
    <location>
        <begin position="1"/>
        <end position="22"/>
    </location>
</feature>
<feature type="chain" id="PRO_0000019333" description="Ecto-ADP-ribosyltransferase 5">
    <location>
        <begin position="23"/>
        <end position="291"/>
    </location>
</feature>
<feature type="domain" description="TR mART core" evidence="3">
    <location>
        <begin position="62"/>
        <end position="252"/>
    </location>
</feature>
<feature type="active site" evidence="3">
    <location>
        <position position="160"/>
    </location>
</feature>
<feature type="active site" evidence="3">
    <location>
        <position position="183"/>
    </location>
</feature>
<feature type="active site" evidence="3">
    <location>
        <position position="221"/>
    </location>
</feature>
<feature type="binding site" evidence="1">
    <location>
        <position position="99"/>
    </location>
    <ligand>
        <name>NAD(+)</name>
        <dbReference type="ChEBI" id="CHEBI:57540"/>
    </ligand>
</feature>
<feature type="binding site" evidence="1">
    <location>
        <position position="160"/>
    </location>
    <ligand>
        <name>NAD(+)</name>
        <dbReference type="ChEBI" id="CHEBI:57540"/>
    </ligand>
</feature>
<feature type="binding site" evidence="1">
    <location>
        <position position="180"/>
    </location>
    <ligand>
        <name>NAD(+)</name>
        <dbReference type="ChEBI" id="CHEBI:57540"/>
    </ligand>
</feature>
<feature type="binding site" evidence="1">
    <location>
        <position position="214"/>
    </location>
    <ligand>
        <name>NAD(+)</name>
        <dbReference type="ChEBI" id="CHEBI:57540"/>
    </ligand>
</feature>
<feature type="glycosylation site" description="N-linked (GlcNAc...) asparagine" evidence="2">
    <location>
        <position position="101"/>
    </location>
</feature>
<feature type="glycosylation site" description="N-linked (GlcNAc...) asparagine" evidence="2">
    <location>
        <position position="196"/>
    </location>
</feature>
<feature type="glycosylation site" description="N-linked (GlcNAc...) asparagine" evidence="2">
    <location>
        <position position="250"/>
    </location>
</feature>
<feature type="disulfide bond" evidence="1">
    <location>
        <begin position="42"/>
        <end position="258"/>
    </location>
</feature>
<feature type="splice variant" id="VSP_013145" description="In isoform 2." evidence="8">
    <location>
        <begin position="195"/>
        <end position="262"/>
    </location>
</feature>
<feature type="splice variant" id="VSP_013146" description="In isoform 2." evidence="8">
    <original>ALGTGDLHMTKRHLQQP</original>
    <variation>VQLGSQSEGASSLPPWKTLLLAPGEFQLSGVGP</variation>
    <location>
        <begin position="275"/>
        <end position="291"/>
    </location>
</feature>
<feature type="sequence variant" id="VAR_063143" description="In dbSNP:rs72515796." evidence="4 5 6 7">
    <original>P</original>
    <variation>PT</variation>
    <location>
        <position position="24"/>
    </location>
</feature>
<feature type="sequence conflict" description="In Ref. 5; AAH14577." evidence="9" ref="5">
    <original>A</original>
    <variation>V</variation>
    <location>
        <position position="43"/>
    </location>
</feature>
<proteinExistence type="evidence at protein level"/>